<protein>
    <recommendedName>
        <fullName evidence="1">Small ribosomal subunit protein bS16</fullName>
    </recommendedName>
    <alternativeName>
        <fullName evidence="2">30S ribosomal protein S16</fullName>
    </alternativeName>
</protein>
<reference key="1">
    <citation type="journal article" date="2005" name="Genome Res.">
        <title>Coping with cold: the genome of the versatile marine Antarctica bacterium Pseudoalteromonas haloplanktis TAC125.</title>
        <authorList>
            <person name="Medigue C."/>
            <person name="Krin E."/>
            <person name="Pascal G."/>
            <person name="Barbe V."/>
            <person name="Bernsel A."/>
            <person name="Bertin P.N."/>
            <person name="Cheung F."/>
            <person name="Cruveiller S."/>
            <person name="D'Amico S."/>
            <person name="Duilio A."/>
            <person name="Fang G."/>
            <person name="Feller G."/>
            <person name="Ho C."/>
            <person name="Mangenot S."/>
            <person name="Marino G."/>
            <person name="Nilsson J."/>
            <person name="Parrilli E."/>
            <person name="Rocha E.P.C."/>
            <person name="Rouy Z."/>
            <person name="Sekowska A."/>
            <person name="Tutino M.L."/>
            <person name="Vallenet D."/>
            <person name="von Heijne G."/>
            <person name="Danchin A."/>
        </authorList>
    </citation>
    <scope>NUCLEOTIDE SEQUENCE [LARGE SCALE GENOMIC DNA]</scope>
    <source>
        <strain>TAC 125</strain>
    </source>
</reference>
<proteinExistence type="inferred from homology"/>
<keyword id="KW-1185">Reference proteome</keyword>
<keyword id="KW-0687">Ribonucleoprotein</keyword>
<keyword id="KW-0689">Ribosomal protein</keyword>
<comment type="similarity">
    <text evidence="1">Belongs to the bacterial ribosomal protein bS16 family.</text>
</comment>
<gene>
    <name evidence="1" type="primary">rpsP</name>
    <name type="ordered locus">PSHAa0944</name>
</gene>
<dbReference type="EMBL" id="CR954246">
    <property type="protein sequence ID" value="CAI86022.1"/>
    <property type="molecule type" value="Genomic_DNA"/>
</dbReference>
<dbReference type="SMR" id="Q3IEC9"/>
<dbReference type="STRING" id="326442.PSHAa0944"/>
<dbReference type="KEGG" id="pha:PSHAa0944"/>
<dbReference type="eggNOG" id="COG0228">
    <property type="taxonomic scope" value="Bacteria"/>
</dbReference>
<dbReference type="HOGENOM" id="CLU_100590_5_1_6"/>
<dbReference type="BioCyc" id="PHAL326442:PSHA_RS04600-MONOMER"/>
<dbReference type="Proteomes" id="UP000006843">
    <property type="component" value="Chromosome I"/>
</dbReference>
<dbReference type="GO" id="GO:0005737">
    <property type="term" value="C:cytoplasm"/>
    <property type="evidence" value="ECO:0007669"/>
    <property type="project" value="UniProtKB-ARBA"/>
</dbReference>
<dbReference type="GO" id="GO:0015935">
    <property type="term" value="C:small ribosomal subunit"/>
    <property type="evidence" value="ECO:0007669"/>
    <property type="project" value="TreeGrafter"/>
</dbReference>
<dbReference type="GO" id="GO:0003735">
    <property type="term" value="F:structural constituent of ribosome"/>
    <property type="evidence" value="ECO:0007669"/>
    <property type="project" value="InterPro"/>
</dbReference>
<dbReference type="GO" id="GO:0006412">
    <property type="term" value="P:translation"/>
    <property type="evidence" value="ECO:0007669"/>
    <property type="project" value="UniProtKB-UniRule"/>
</dbReference>
<dbReference type="FunFam" id="3.30.1320.10:FF:000001">
    <property type="entry name" value="30S ribosomal protein S16"/>
    <property type="match status" value="1"/>
</dbReference>
<dbReference type="Gene3D" id="3.30.1320.10">
    <property type="match status" value="1"/>
</dbReference>
<dbReference type="HAMAP" id="MF_00385">
    <property type="entry name" value="Ribosomal_bS16"/>
    <property type="match status" value="1"/>
</dbReference>
<dbReference type="InterPro" id="IPR000307">
    <property type="entry name" value="Ribosomal_bS16"/>
</dbReference>
<dbReference type="InterPro" id="IPR023803">
    <property type="entry name" value="Ribosomal_bS16_dom_sf"/>
</dbReference>
<dbReference type="NCBIfam" id="TIGR00002">
    <property type="entry name" value="S16"/>
    <property type="match status" value="1"/>
</dbReference>
<dbReference type="PANTHER" id="PTHR12919">
    <property type="entry name" value="30S RIBOSOMAL PROTEIN S16"/>
    <property type="match status" value="1"/>
</dbReference>
<dbReference type="PANTHER" id="PTHR12919:SF20">
    <property type="entry name" value="SMALL RIBOSOMAL SUBUNIT PROTEIN BS16M"/>
    <property type="match status" value="1"/>
</dbReference>
<dbReference type="Pfam" id="PF00886">
    <property type="entry name" value="Ribosomal_S16"/>
    <property type="match status" value="1"/>
</dbReference>
<dbReference type="SUPFAM" id="SSF54565">
    <property type="entry name" value="Ribosomal protein S16"/>
    <property type="match status" value="1"/>
</dbReference>
<evidence type="ECO:0000255" key="1">
    <source>
        <dbReference type="HAMAP-Rule" id="MF_00385"/>
    </source>
</evidence>
<evidence type="ECO:0000305" key="2"/>
<feature type="chain" id="PRO_0000243848" description="Small ribosomal subunit protein bS16">
    <location>
        <begin position="1"/>
        <end position="82"/>
    </location>
</feature>
<organism>
    <name type="scientific">Pseudoalteromonas translucida (strain TAC 125)</name>
    <dbReference type="NCBI Taxonomy" id="326442"/>
    <lineage>
        <taxon>Bacteria</taxon>
        <taxon>Pseudomonadati</taxon>
        <taxon>Pseudomonadota</taxon>
        <taxon>Gammaproteobacteria</taxon>
        <taxon>Alteromonadales</taxon>
        <taxon>Pseudoalteromonadaceae</taxon>
        <taxon>Pseudoalteromonas</taxon>
    </lineage>
</organism>
<name>RS16_PSET1</name>
<sequence length="82" mass="9254">MVTIRLQRGGAKKRPFYQIVVADSRFSRDGRFIEKVGFFNPIAAGQEEKIRLDLPRVEHWVGQGASLSDRVAKLVKDARKAA</sequence>
<accession>Q3IEC9</accession>